<dbReference type="EMBL" id="U00006">
    <property type="protein sequence ID" value="AAC43055.1"/>
    <property type="molecule type" value="Genomic_DNA"/>
</dbReference>
<dbReference type="EMBL" id="U00096">
    <property type="protein sequence ID" value="AAC76931.1"/>
    <property type="molecule type" value="Genomic_DNA"/>
</dbReference>
<dbReference type="EMBL" id="AP009048">
    <property type="protein sequence ID" value="BAE77362.1"/>
    <property type="molecule type" value="Genomic_DNA"/>
</dbReference>
<dbReference type="PIR" id="H65201">
    <property type="entry name" value="H65201"/>
</dbReference>
<dbReference type="RefSeq" id="NP_418384.1">
    <property type="nucleotide sequence ID" value="NC_000913.3"/>
</dbReference>
<dbReference type="RefSeq" id="WP_001004446.1">
    <property type="nucleotide sequence ID" value="NZ_SSZK01000014.1"/>
</dbReference>
<dbReference type="BioGRID" id="4262060">
    <property type="interactions" value="5"/>
</dbReference>
<dbReference type="ComplexPortal" id="CPX-5994">
    <property type="entry name" value="Frw fuctose-like enzyme II complex"/>
</dbReference>
<dbReference type="FunCoup" id="P32672">
    <property type="interactions" value="117"/>
</dbReference>
<dbReference type="STRING" id="511145.b3949"/>
<dbReference type="TCDB" id="4.A.2.1.10">
    <property type="family name" value="the pts fructose-mannitol (fru) family"/>
</dbReference>
<dbReference type="PaxDb" id="511145-b3949"/>
<dbReference type="EnsemblBacteria" id="AAC76931">
    <property type="protein sequence ID" value="AAC76931"/>
    <property type="gene ID" value="b3949"/>
</dbReference>
<dbReference type="GeneID" id="948448"/>
<dbReference type="KEGG" id="ecj:JW3921"/>
<dbReference type="KEGG" id="eco:b3949"/>
<dbReference type="PATRIC" id="fig|1411691.4.peg.2756"/>
<dbReference type="EchoBASE" id="EB1852"/>
<dbReference type="eggNOG" id="COG1299">
    <property type="taxonomic scope" value="Bacteria"/>
</dbReference>
<dbReference type="HOGENOM" id="CLU_013155_0_1_6"/>
<dbReference type="InParanoid" id="P32672"/>
<dbReference type="OMA" id="QGQNGIQ"/>
<dbReference type="PhylomeDB" id="P32672"/>
<dbReference type="BioCyc" id="EcoCyc:FRWC-MONOMER"/>
<dbReference type="BioCyc" id="MetaCyc:FRWC-MONOMER"/>
<dbReference type="PRO" id="PR:P32672"/>
<dbReference type="Proteomes" id="UP000000625">
    <property type="component" value="Chromosome"/>
</dbReference>
<dbReference type="GO" id="GO:0005886">
    <property type="term" value="C:plasma membrane"/>
    <property type="evidence" value="ECO:0000314"/>
    <property type="project" value="EcoCyc"/>
</dbReference>
<dbReference type="GO" id="GO:1902495">
    <property type="term" value="C:transmembrane transporter complex"/>
    <property type="evidence" value="ECO:0000303"/>
    <property type="project" value="ComplexPortal"/>
</dbReference>
<dbReference type="GO" id="GO:0005351">
    <property type="term" value="F:carbohydrate:proton symporter activity"/>
    <property type="evidence" value="ECO:0007669"/>
    <property type="project" value="InterPro"/>
</dbReference>
<dbReference type="GO" id="GO:0008982">
    <property type="term" value="F:protein-N(PI)-phosphohistidine-sugar phosphotransferase activity"/>
    <property type="evidence" value="ECO:0007669"/>
    <property type="project" value="InterPro"/>
</dbReference>
<dbReference type="GO" id="GO:0090563">
    <property type="term" value="F:protein-phosphocysteine-sugar phosphotransferase activity"/>
    <property type="evidence" value="ECO:0000318"/>
    <property type="project" value="GO_Central"/>
</dbReference>
<dbReference type="GO" id="GO:1990539">
    <property type="term" value="P:fructose import across plasma membrane"/>
    <property type="evidence" value="ECO:0000303"/>
    <property type="project" value="ComplexPortal"/>
</dbReference>
<dbReference type="GO" id="GO:0009401">
    <property type="term" value="P:phosphoenolpyruvate-dependent sugar phosphotransferase system"/>
    <property type="evidence" value="ECO:0000318"/>
    <property type="project" value="GO_Central"/>
</dbReference>
<dbReference type="InterPro" id="IPR050864">
    <property type="entry name" value="Bacterial_PTS_Sugar_Transport"/>
</dbReference>
<dbReference type="InterPro" id="IPR013014">
    <property type="entry name" value="PTS_EIIC_2"/>
</dbReference>
<dbReference type="InterPro" id="IPR006327">
    <property type="entry name" value="PTS_IIC_fruc"/>
</dbReference>
<dbReference type="NCBIfam" id="NF007787">
    <property type="entry name" value="PRK10478.1"/>
    <property type="match status" value="1"/>
</dbReference>
<dbReference type="NCBIfam" id="TIGR01427">
    <property type="entry name" value="PTS_IIC_fructo"/>
    <property type="match status" value="1"/>
</dbReference>
<dbReference type="PANTHER" id="PTHR30505">
    <property type="entry name" value="FRUCTOSE-LIKE PERMEASE"/>
    <property type="match status" value="1"/>
</dbReference>
<dbReference type="PANTHER" id="PTHR30505:SF34">
    <property type="entry name" value="FRUCTOSE-LIKE PERMEASE IIC COMPONENT 2"/>
    <property type="match status" value="1"/>
</dbReference>
<dbReference type="PROSITE" id="PS51104">
    <property type="entry name" value="PTS_EIIC_TYPE_2"/>
    <property type="match status" value="1"/>
</dbReference>
<organism>
    <name type="scientific">Escherichia coli (strain K12)</name>
    <dbReference type="NCBI Taxonomy" id="83333"/>
    <lineage>
        <taxon>Bacteria</taxon>
        <taxon>Pseudomonadati</taxon>
        <taxon>Pseudomonadota</taxon>
        <taxon>Gammaproteobacteria</taxon>
        <taxon>Enterobacterales</taxon>
        <taxon>Enterobacteriaceae</taxon>
        <taxon>Escherichia</taxon>
    </lineage>
</organism>
<protein>
    <recommendedName>
        <fullName>Fructose-like permease IIC component 2</fullName>
    </recommendedName>
    <alternativeName>
        <fullName>PTS system fructose-like EIIC component 2</fullName>
    </alternativeName>
</protein>
<proteinExistence type="inferred from homology"/>
<reference key="1">
    <citation type="journal article" date="1993" name="Nucleic Acids Res.">
        <title>Analysis of the Escherichia coli genome. IV. DNA sequence of the region from 89.2 to 92.8 minutes.</title>
        <authorList>
            <person name="Blattner F.R."/>
            <person name="Burland V.D."/>
            <person name="Plunkett G. III"/>
            <person name="Sofia H.J."/>
            <person name="Daniels D.L."/>
        </authorList>
    </citation>
    <scope>NUCLEOTIDE SEQUENCE [LARGE SCALE GENOMIC DNA]</scope>
    <source>
        <strain>K12 / MG1655 / ATCC 47076</strain>
    </source>
</reference>
<reference key="2">
    <citation type="journal article" date="1997" name="Science">
        <title>The complete genome sequence of Escherichia coli K-12.</title>
        <authorList>
            <person name="Blattner F.R."/>
            <person name="Plunkett G. III"/>
            <person name="Bloch C.A."/>
            <person name="Perna N.T."/>
            <person name="Burland V."/>
            <person name="Riley M."/>
            <person name="Collado-Vides J."/>
            <person name="Glasner J.D."/>
            <person name="Rode C.K."/>
            <person name="Mayhew G.F."/>
            <person name="Gregor J."/>
            <person name="Davis N.W."/>
            <person name="Kirkpatrick H.A."/>
            <person name="Goeden M.A."/>
            <person name="Rose D.J."/>
            <person name="Mau B."/>
            <person name="Shao Y."/>
        </authorList>
    </citation>
    <scope>NUCLEOTIDE SEQUENCE [LARGE SCALE GENOMIC DNA]</scope>
    <source>
        <strain>K12 / MG1655 / ATCC 47076</strain>
    </source>
</reference>
<reference key="3">
    <citation type="journal article" date="2006" name="Mol. Syst. Biol.">
        <title>Highly accurate genome sequences of Escherichia coli K-12 strains MG1655 and W3110.</title>
        <authorList>
            <person name="Hayashi K."/>
            <person name="Morooka N."/>
            <person name="Yamamoto Y."/>
            <person name="Fujita K."/>
            <person name="Isono K."/>
            <person name="Choi S."/>
            <person name="Ohtsubo E."/>
            <person name="Baba T."/>
            <person name="Wanner B.L."/>
            <person name="Mori H."/>
            <person name="Horiuchi T."/>
        </authorList>
    </citation>
    <scope>NUCLEOTIDE SEQUENCE [LARGE SCALE GENOMIC DNA]</scope>
    <source>
        <strain>K12 / W3110 / ATCC 27325 / DSM 5911</strain>
    </source>
</reference>
<reference key="4">
    <citation type="journal article" date="1995" name="Microbiology">
        <title>Novel phosphotransferase system genes revealed by bacterial genome analysis -- a gene cluster encoding a unique Enzyme I and the proteins of a fructose-like permease system.</title>
        <authorList>
            <person name="Reizer J."/>
            <person name="Reizer A."/>
            <person name="Saier M.H. Jr."/>
        </authorList>
    </citation>
    <scope>DISCUSSION OF SEQUENCE</scope>
</reference>
<reference key="5">
    <citation type="journal article" date="2005" name="Science">
        <title>Global topology analysis of the Escherichia coli inner membrane proteome.</title>
        <authorList>
            <person name="Daley D.O."/>
            <person name="Rapp M."/>
            <person name="Granseth E."/>
            <person name="Melen K."/>
            <person name="Drew D."/>
            <person name="von Heijne G."/>
        </authorList>
    </citation>
    <scope>SUBCELLULAR LOCATION</scope>
    <source>
        <strain>K12 / MG1655 / ATCC 47076</strain>
    </source>
</reference>
<keyword id="KW-0997">Cell inner membrane</keyword>
<keyword id="KW-1003">Cell membrane</keyword>
<keyword id="KW-0472">Membrane</keyword>
<keyword id="KW-0598">Phosphotransferase system</keyword>
<keyword id="KW-1185">Reference proteome</keyword>
<keyword id="KW-0762">Sugar transport</keyword>
<keyword id="KW-0812">Transmembrane</keyword>
<keyword id="KW-1133">Transmembrane helix</keyword>
<keyword id="KW-0813">Transport</keyword>
<gene>
    <name type="primary">frwC</name>
    <name type="synonym">yijJ</name>
    <name type="ordered locus">b3949</name>
    <name type="ordered locus">JW3921</name>
</gene>
<evidence type="ECO:0000250" key="1"/>
<evidence type="ECO:0000255" key="2">
    <source>
        <dbReference type="PROSITE-ProRule" id="PRU00427"/>
    </source>
</evidence>
<evidence type="ECO:0000269" key="3">
    <source>
    </source>
</evidence>
<feature type="chain" id="PRO_0000186506" description="Fructose-like permease IIC component 2">
    <location>
        <begin position="1"/>
        <end position="359"/>
    </location>
</feature>
<feature type="transmembrane region" description="Helical" evidence="2">
    <location>
        <begin position="19"/>
        <end position="39"/>
    </location>
</feature>
<feature type="transmembrane region" description="Helical" evidence="2">
    <location>
        <begin position="60"/>
        <end position="80"/>
    </location>
</feature>
<feature type="transmembrane region" description="Helical" evidence="2">
    <location>
        <begin position="99"/>
        <end position="119"/>
    </location>
</feature>
<feature type="transmembrane region" description="Helical" evidence="2">
    <location>
        <begin position="135"/>
        <end position="155"/>
    </location>
</feature>
<feature type="transmembrane region" description="Helical" evidence="2">
    <location>
        <begin position="176"/>
        <end position="196"/>
    </location>
</feature>
<feature type="transmembrane region" description="Helical" evidence="2">
    <location>
        <begin position="216"/>
        <end position="236"/>
    </location>
</feature>
<feature type="transmembrane region" description="Helical" evidence="2">
    <location>
        <begin position="251"/>
        <end position="271"/>
    </location>
</feature>
<feature type="transmembrane region" description="Helical" evidence="2">
    <location>
        <begin position="290"/>
        <end position="310"/>
    </location>
</feature>
<feature type="transmembrane region" description="Helical" evidence="2">
    <location>
        <begin position="314"/>
        <end position="334"/>
    </location>
</feature>
<feature type="domain" description="PTS EIIC type-2" evidence="2">
    <location>
        <begin position="11"/>
        <end position="344"/>
    </location>
</feature>
<name>PTFC2_ECOLI</name>
<comment type="function">
    <text evidence="1">The phosphoenolpyruvate-dependent sugar phosphotransferase system (PTS), a major carbohydrate active -transport system, catalyzes the phosphorylation of incoming sugar substrates concomitant with their translocation across the cell membrane.</text>
</comment>
<comment type="subcellular location">
    <subcellularLocation>
        <location evidence="2 3">Cell inner membrane</location>
        <topology evidence="2 3">Multi-pass membrane protein</topology>
    </subcellularLocation>
</comment>
<comment type="domain">
    <text>The EIIC domain forms the PTS system translocation channel and contains the specific substrate-binding site.</text>
</comment>
<sequence length="359" mass="37086">MNELVQILKNTRQHLMTGVSHMIPFVVSGGILLAVSVMLYGKGAVPDAVADPNLKKLFDIGVAGLTLMVPFLAAYIGYSIAERSALAPCAIGAWVGNSFGAGFFGALIAGIIGGIVVHYLKKIPVHKVLRSVMPIFIIPIVGTLITAGIMMWGLGEPVGALTNSLTQWLQGMQQGSIVMLAVIMGLMLAFDMGGPVNKVAYAFMLICVAQGVYTVVAIAAVGICIPPLGMGLATLIGRKNFSAEERETGKAALVMGCVGVTEGAIPFAAADPLRVIPSIMVGSVCGAVTAALVGAQCYAGWGGLIVLPVVEGKLGYIAAVAVGAVVTAVCVNVLKSLARKNGSSTDEKEDDLDLDFEIN</sequence>
<accession>P32672</accession>
<accession>Q2M8P4</accession>